<protein>
    <recommendedName>
        <fullName evidence="1">Glycerol-3-phosphate dehydrogenase [NAD(P)+]</fullName>
        <ecNumber evidence="1">1.1.1.94</ecNumber>
    </recommendedName>
    <alternativeName>
        <fullName evidence="1">NAD(P)(+)-dependent glycerol-3-phosphate dehydrogenase</fullName>
    </alternativeName>
    <alternativeName>
        <fullName evidence="1">NAD(P)H-dependent dihydroxyacetone-phosphate reductase</fullName>
    </alternativeName>
</protein>
<name>GPDA_STAA9</name>
<dbReference type="EC" id="1.1.1.94" evidence="1"/>
<dbReference type="EMBL" id="CP000703">
    <property type="protein sequence ID" value="ABQ49325.1"/>
    <property type="molecule type" value="Genomic_DNA"/>
</dbReference>
<dbReference type="RefSeq" id="WP_000161745.1">
    <property type="nucleotide sequence ID" value="NC_009487.1"/>
</dbReference>
<dbReference type="SMR" id="A5IT02"/>
<dbReference type="KEGG" id="saj:SaurJH9_1531"/>
<dbReference type="HOGENOM" id="CLU_033449_0_2_9"/>
<dbReference type="UniPathway" id="UPA00940"/>
<dbReference type="GO" id="GO:0005829">
    <property type="term" value="C:cytosol"/>
    <property type="evidence" value="ECO:0007669"/>
    <property type="project" value="TreeGrafter"/>
</dbReference>
<dbReference type="GO" id="GO:0047952">
    <property type="term" value="F:glycerol-3-phosphate dehydrogenase [NAD(P)+] activity"/>
    <property type="evidence" value="ECO:0007669"/>
    <property type="project" value="UniProtKB-UniRule"/>
</dbReference>
<dbReference type="GO" id="GO:0051287">
    <property type="term" value="F:NAD binding"/>
    <property type="evidence" value="ECO:0007669"/>
    <property type="project" value="InterPro"/>
</dbReference>
<dbReference type="GO" id="GO:0005975">
    <property type="term" value="P:carbohydrate metabolic process"/>
    <property type="evidence" value="ECO:0007669"/>
    <property type="project" value="InterPro"/>
</dbReference>
<dbReference type="GO" id="GO:0046167">
    <property type="term" value="P:glycerol-3-phosphate biosynthetic process"/>
    <property type="evidence" value="ECO:0007669"/>
    <property type="project" value="UniProtKB-UniRule"/>
</dbReference>
<dbReference type="GO" id="GO:0046168">
    <property type="term" value="P:glycerol-3-phosphate catabolic process"/>
    <property type="evidence" value="ECO:0007669"/>
    <property type="project" value="InterPro"/>
</dbReference>
<dbReference type="GO" id="GO:0006650">
    <property type="term" value="P:glycerophospholipid metabolic process"/>
    <property type="evidence" value="ECO:0007669"/>
    <property type="project" value="UniProtKB-UniRule"/>
</dbReference>
<dbReference type="GO" id="GO:0008654">
    <property type="term" value="P:phospholipid biosynthetic process"/>
    <property type="evidence" value="ECO:0007669"/>
    <property type="project" value="UniProtKB-KW"/>
</dbReference>
<dbReference type="FunFam" id="1.10.1040.10:FF:000001">
    <property type="entry name" value="Glycerol-3-phosphate dehydrogenase [NAD(P)+]"/>
    <property type="match status" value="1"/>
</dbReference>
<dbReference type="FunFam" id="3.40.50.720:FF:000019">
    <property type="entry name" value="Glycerol-3-phosphate dehydrogenase [NAD(P)+]"/>
    <property type="match status" value="1"/>
</dbReference>
<dbReference type="Gene3D" id="1.10.1040.10">
    <property type="entry name" value="N-(1-d-carboxylethyl)-l-norvaline Dehydrogenase, domain 2"/>
    <property type="match status" value="1"/>
</dbReference>
<dbReference type="Gene3D" id="3.40.50.720">
    <property type="entry name" value="NAD(P)-binding Rossmann-like Domain"/>
    <property type="match status" value="1"/>
</dbReference>
<dbReference type="HAMAP" id="MF_00394">
    <property type="entry name" value="NAD_Glyc3P_dehydrog"/>
    <property type="match status" value="1"/>
</dbReference>
<dbReference type="InterPro" id="IPR008927">
    <property type="entry name" value="6-PGluconate_DH-like_C_sf"/>
</dbReference>
<dbReference type="InterPro" id="IPR013328">
    <property type="entry name" value="6PGD_dom2"/>
</dbReference>
<dbReference type="InterPro" id="IPR006168">
    <property type="entry name" value="G3P_DH_NAD-dep"/>
</dbReference>
<dbReference type="InterPro" id="IPR006109">
    <property type="entry name" value="G3P_DH_NAD-dep_C"/>
</dbReference>
<dbReference type="InterPro" id="IPR011128">
    <property type="entry name" value="G3P_DH_NAD-dep_N"/>
</dbReference>
<dbReference type="InterPro" id="IPR036291">
    <property type="entry name" value="NAD(P)-bd_dom_sf"/>
</dbReference>
<dbReference type="NCBIfam" id="NF000940">
    <property type="entry name" value="PRK00094.1-2"/>
    <property type="match status" value="1"/>
</dbReference>
<dbReference type="NCBIfam" id="NF000941">
    <property type="entry name" value="PRK00094.1-3"/>
    <property type="match status" value="1"/>
</dbReference>
<dbReference type="NCBIfam" id="NF000942">
    <property type="entry name" value="PRK00094.1-4"/>
    <property type="match status" value="1"/>
</dbReference>
<dbReference type="PANTHER" id="PTHR11728">
    <property type="entry name" value="GLYCEROL-3-PHOSPHATE DEHYDROGENASE"/>
    <property type="match status" value="1"/>
</dbReference>
<dbReference type="PANTHER" id="PTHR11728:SF1">
    <property type="entry name" value="GLYCEROL-3-PHOSPHATE DEHYDROGENASE [NAD(+)] 2, CHLOROPLASTIC"/>
    <property type="match status" value="1"/>
</dbReference>
<dbReference type="Pfam" id="PF07479">
    <property type="entry name" value="NAD_Gly3P_dh_C"/>
    <property type="match status" value="1"/>
</dbReference>
<dbReference type="Pfam" id="PF01210">
    <property type="entry name" value="NAD_Gly3P_dh_N"/>
    <property type="match status" value="1"/>
</dbReference>
<dbReference type="PIRSF" id="PIRSF000114">
    <property type="entry name" value="Glycerol-3-P_dh"/>
    <property type="match status" value="1"/>
</dbReference>
<dbReference type="PRINTS" id="PR00077">
    <property type="entry name" value="GPDHDRGNASE"/>
</dbReference>
<dbReference type="SUPFAM" id="SSF48179">
    <property type="entry name" value="6-phosphogluconate dehydrogenase C-terminal domain-like"/>
    <property type="match status" value="1"/>
</dbReference>
<dbReference type="SUPFAM" id="SSF51735">
    <property type="entry name" value="NAD(P)-binding Rossmann-fold domains"/>
    <property type="match status" value="1"/>
</dbReference>
<dbReference type="PROSITE" id="PS00957">
    <property type="entry name" value="NAD_G3PDH"/>
    <property type="match status" value="1"/>
</dbReference>
<comment type="function">
    <text evidence="1">Catalyzes the reduction of the glycolytic intermediate dihydroxyacetone phosphate (DHAP) to sn-glycerol 3-phosphate (G3P), the key precursor for phospholipid synthesis.</text>
</comment>
<comment type="catalytic activity">
    <reaction evidence="1">
        <text>sn-glycerol 3-phosphate + NAD(+) = dihydroxyacetone phosphate + NADH + H(+)</text>
        <dbReference type="Rhea" id="RHEA:11092"/>
        <dbReference type="ChEBI" id="CHEBI:15378"/>
        <dbReference type="ChEBI" id="CHEBI:57540"/>
        <dbReference type="ChEBI" id="CHEBI:57597"/>
        <dbReference type="ChEBI" id="CHEBI:57642"/>
        <dbReference type="ChEBI" id="CHEBI:57945"/>
        <dbReference type="EC" id="1.1.1.94"/>
    </reaction>
    <physiologicalReaction direction="right-to-left" evidence="1">
        <dbReference type="Rhea" id="RHEA:11094"/>
    </physiologicalReaction>
</comment>
<comment type="catalytic activity">
    <reaction evidence="1">
        <text>sn-glycerol 3-phosphate + NADP(+) = dihydroxyacetone phosphate + NADPH + H(+)</text>
        <dbReference type="Rhea" id="RHEA:11096"/>
        <dbReference type="ChEBI" id="CHEBI:15378"/>
        <dbReference type="ChEBI" id="CHEBI:57597"/>
        <dbReference type="ChEBI" id="CHEBI:57642"/>
        <dbReference type="ChEBI" id="CHEBI:57783"/>
        <dbReference type="ChEBI" id="CHEBI:58349"/>
        <dbReference type="EC" id="1.1.1.94"/>
    </reaction>
    <physiologicalReaction direction="right-to-left" evidence="1">
        <dbReference type="Rhea" id="RHEA:11098"/>
    </physiologicalReaction>
</comment>
<comment type="pathway">
    <text evidence="1">Membrane lipid metabolism; glycerophospholipid metabolism.</text>
</comment>
<comment type="subcellular location">
    <subcellularLocation>
        <location evidence="1">Cytoplasm</location>
    </subcellularLocation>
</comment>
<comment type="similarity">
    <text evidence="1">Belongs to the NAD-dependent glycerol-3-phosphate dehydrogenase family.</text>
</comment>
<proteinExistence type="inferred from homology"/>
<organism>
    <name type="scientific">Staphylococcus aureus (strain JH9)</name>
    <dbReference type="NCBI Taxonomy" id="359786"/>
    <lineage>
        <taxon>Bacteria</taxon>
        <taxon>Bacillati</taxon>
        <taxon>Bacillota</taxon>
        <taxon>Bacilli</taxon>
        <taxon>Bacillales</taxon>
        <taxon>Staphylococcaceae</taxon>
        <taxon>Staphylococcus</taxon>
    </lineage>
</organism>
<evidence type="ECO:0000255" key="1">
    <source>
        <dbReference type="HAMAP-Rule" id="MF_00394"/>
    </source>
</evidence>
<gene>
    <name evidence="1" type="primary">gpsA</name>
    <name type="ordered locus">SaurJH9_1531</name>
</gene>
<accession>A5IT02</accession>
<feature type="chain" id="PRO_1000080321" description="Glycerol-3-phosphate dehydrogenase [NAD(P)+]">
    <location>
        <begin position="1"/>
        <end position="332"/>
    </location>
</feature>
<feature type="active site" description="Proton acceptor" evidence="1">
    <location>
        <position position="192"/>
    </location>
</feature>
<feature type="binding site" evidence="1">
    <location>
        <position position="11"/>
    </location>
    <ligand>
        <name>NADPH</name>
        <dbReference type="ChEBI" id="CHEBI:57783"/>
    </ligand>
</feature>
<feature type="binding site" evidence="1">
    <location>
        <position position="12"/>
    </location>
    <ligand>
        <name>NADPH</name>
        <dbReference type="ChEBI" id="CHEBI:57783"/>
    </ligand>
</feature>
<feature type="binding site" evidence="1">
    <location>
        <position position="32"/>
    </location>
    <ligand>
        <name>NADPH</name>
        <dbReference type="ChEBI" id="CHEBI:57783"/>
    </ligand>
</feature>
<feature type="binding site" evidence="1">
    <location>
        <position position="106"/>
    </location>
    <ligand>
        <name>NADPH</name>
        <dbReference type="ChEBI" id="CHEBI:57783"/>
    </ligand>
</feature>
<feature type="binding site" evidence="1">
    <location>
        <position position="106"/>
    </location>
    <ligand>
        <name>sn-glycerol 3-phosphate</name>
        <dbReference type="ChEBI" id="CHEBI:57597"/>
    </ligand>
</feature>
<feature type="binding site" evidence="1">
    <location>
        <position position="137"/>
    </location>
    <ligand>
        <name>sn-glycerol 3-phosphate</name>
        <dbReference type="ChEBI" id="CHEBI:57597"/>
    </ligand>
</feature>
<feature type="binding site" evidence="1">
    <location>
        <position position="139"/>
    </location>
    <ligand>
        <name>sn-glycerol 3-phosphate</name>
        <dbReference type="ChEBI" id="CHEBI:57597"/>
    </ligand>
</feature>
<feature type="binding site" evidence="1">
    <location>
        <position position="141"/>
    </location>
    <ligand>
        <name>NADPH</name>
        <dbReference type="ChEBI" id="CHEBI:57783"/>
    </ligand>
</feature>
<feature type="binding site" evidence="1">
    <location>
        <position position="192"/>
    </location>
    <ligand>
        <name>sn-glycerol 3-phosphate</name>
        <dbReference type="ChEBI" id="CHEBI:57597"/>
    </ligand>
</feature>
<feature type="binding site" evidence="1">
    <location>
        <position position="245"/>
    </location>
    <ligand>
        <name>sn-glycerol 3-phosphate</name>
        <dbReference type="ChEBI" id="CHEBI:57597"/>
    </ligand>
</feature>
<feature type="binding site" evidence="1">
    <location>
        <position position="255"/>
    </location>
    <ligand>
        <name>sn-glycerol 3-phosphate</name>
        <dbReference type="ChEBI" id="CHEBI:57597"/>
    </ligand>
</feature>
<feature type="binding site" evidence="1">
    <location>
        <position position="256"/>
    </location>
    <ligand>
        <name>NADPH</name>
        <dbReference type="ChEBI" id="CHEBI:57783"/>
    </ligand>
</feature>
<feature type="binding site" evidence="1">
    <location>
        <position position="256"/>
    </location>
    <ligand>
        <name>sn-glycerol 3-phosphate</name>
        <dbReference type="ChEBI" id="CHEBI:57597"/>
    </ligand>
</feature>
<feature type="binding site" evidence="1">
    <location>
        <position position="257"/>
    </location>
    <ligand>
        <name>sn-glycerol 3-phosphate</name>
        <dbReference type="ChEBI" id="CHEBI:57597"/>
    </ligand>
</feature>
<feature type="binding site" evidence="1">
    <location>
        <position position="280"/>
    </location>
    <ligand>
        <name>NADPH</name>
        <dbReference type="ChEBI" id="CHEBI:57783"/>
    </ligand>
</feature>
<feature type="binding site" evidence="1">
    <location>
        <position position="282"/>
    </location>
    <ligand>
        <name>NADPH</name>
        <dbReference type="ChEBI" id="CHEBI:57783"/>
    </ligand>
</feature>
<keyword id="KW-0963">Cytoplasm</keyword>
<keyword id="KW-0444">Lipid biosynthesis</keyword>
<keyword id="KW-0443">Lipid metabolism</keyword>
<keyword id="KW-0520">NAD</keyword>
<keyword id="KW-0521">NADP</keyword>
<keyword id="KW-0547">Nucleotide-binding</keyword>
<keyword id="KW-0560">Oxidoreductase</keyword>
<keyword id="KW-0594">Phospholipid biosynthesis</keyword>
<keyword id="KW-1208">Phospholipid metabolism</keyword>
<sequence>MTKITVFGMGSFGTALANVLAENGHDVLMWGKNQDAVDELNTCHTNKKYLKYAKLDVNIIATSDMTKAIQFADIYLMALPTKAMREVATQINDKLTSKKTFIHVAKGIENGTFKRVSEMIEDSISPEYNAGIGVLSGPSHAEEVVVKQPTTVAASSKDKSVSKLTQDLFMNDYLRVYTNDDLIGVELGGALKNIIAVASGIVAGIGYGDNAKAALMTRGLAEISRLGEKLGADPMTFLGLGGIGDLIVTCISTHSRNFTLGYKLGQGESMDQALSEMNMVVEGIYTTKSVYHLAKEKNVDMPITNALYRVLFENISVKECVKDLMERDKKSE</sequence>
<reference key="1">
    <citation type="submission" date="2007-05" db="EMBL/GenBank/DDBJ databases">
        <title>Complete sequence of chromosome of Staphylococcus aureus subsp. aureus JH9.</title>
        <authorList>
            <consortium name="US DOE Joint Genome Institute"/>
            <person name="Copeland A."/>
            <person name="Lucas S."/>
            <person name="Lapidus A."/>
            <person name="Barry K."/>
            <person name="Detter J.C."/>
            <person name="Glavina del Rio T."/>
            <person name="Hammon N."/>
            <person name="Israni S."/>
            <person name="Pitluck S."/>
            <person name="Chain P."/>
            <person name="Malfatti S."/>
            <person name="Shin M."/>
            <person name="Vergez L."/>
            <person name="Schmutz J."/>
            <person name="Larimer F."/>
            <person name="Land M."/>
            <person name="Hauser L."/>
            <person name="Kyrpides N."/>
            <person name="Kim E."/>
            <person name="Tomasz A."/>
            <person name="Richardson P."/>
        </authorList>
    </citation>
    <scope>NUCLEOTIDE SEQUENCE [LARGE SCALE GENOMIC DNA]</scope>
    <source>
        <strain>JH9</strain>
    </source>
</reference>